<proteinExistence type="inferred from homology"/>
<reference key="1">
    <citation type="journal article" date="2007" name="BMC Genomics">
        <title>Comparative chloroplast genomics: analyses including new sequences from the angiosperms Nuphar advena and Ranunculus macranthus.</title>
        <authorList>
            <person name="Raubeson L.A."/>
            <person name="Peery R."/>
            <person name="Chumley T.W."/>
            <person name="Dziubek C."/>
            <person name="Fourcade H.M."/>
            <person name="Boore J.L."/>
            <person name="Jansen R.K."/>
        </authorList>
    </citation>
    <scope>NUCLEOTIDE SEQUENCE [LARGE SCALE GENOMIC DNA]</scope>
</reference>
<feature type="chain" id="PRO_0000298587" description="NAD(P)H-quinone oxidoreductase subunit I, chloroplastic">
    <location>
        <begin position="1"/>
        <end position="180"/>
    </location>
</feature>
<feature type="domain" description="4Fe-4S ferredoxin-type 1" evidence="1">
    <location>
        <begin position="55"/>
        <end position="84"/>
    </location>
</feature>
<feature type="domain" description="4Fe-4S ferredoxin-type 2" evidence="1">
    <location>
        <begin position="95"/>
        <end position="124"/>
    </location>
</feature>
<feature type="binding site" evidence="1">
    <location>
        <position position="64"/>
    </location>
    <ligand>
        <name>[4Fe-4S] cluster</name>
        <dbReference type="ChEBI" id="CHEBI:49883"/>
        <label>1</label>
    </ligand>
</feature>
<feature type="binding site" evidence="1">
    <location>
        <position position="67"/>
    </location>
    <ligand>
        <name>[4Fe-4S] cluster</name>
        <dbReference type="ChEBI" id="CHEBI:49883"/>
        <label>1</label>
    </ligand>
</feature>
<feature type="binding site" evidence="1">
    <location>
        <position position="70"/>
    </location>
    <ligand>
        <name>[4Fe-4S] cluster</name>
        <dbReference type="ChEBI" id="CHEBI:49883"/>
        <label>1</label>
    </ligand>
</feature>
<feature type="binding site" evidence="1">
    <location>
        <position position="74"/>
    </location>
    <ligand>
        <name>[4Fe-4S] cluster</name>
        <dbReference type="ChEBI" id="CHEBI:49883"/>
        <label>2</label>
    </ligand>
</feature>
<feature type="binding site" evidence="1">
    <location>
        <position position="104"/>
    </location>
    <ligand>
        <name>[4Fe-4S] cluster</name>
        <dbReference type="ChEBI" id="CHEBI:49883"/>
        <label>2</label>
    </ligand>
</feature>
<feature type="binding site" evidence="1">
    <location>
        <position position="107"/>
    </location>
    <ligand>
        <name>[4Fe-4S] cluster</name>
        <dbReference type="ChEBI" id="CHEBI:49883"/>
        <label>2</label>
    </ligand>
</feature>
<feature type="binding site" evidence="1">
    <location>
        <position position="110"/>
    </location>
    <ligand>
        <name>[4Fe-4S] cluster</name>
        <dbReference type="ChEBI" id="CHEBI:49883"/>
        <label>2</label>
    </ligand>
</feature>
<feature type="binding site" evidence="1">
    <location>
        <position position="114"/>
    </location>
    <ligand>
        <name>[4Fe-4S] cluster</name>
        <dbReference type="ChEBI" id="CHEBI:49883"/>
        <label>1</label>
    </ligand>
</feature>
<evidence type="ECO:0000255" key="1">
    <source>
        <dbReference type="HAMAP-Rule" id="MF_01351"/>
    </source>
</evidence>
<sequence length="180" mass="20831">MFPMVTGFMNYGQQTVRAARYIGQSLMITLSHANRLPVTIQYPYEKVITSERFRGRIHFEFDKCIACEVCVRVCPIDLPVVDWKLETNIRKKRLLNYSIDFGICIFCGNCVEYCPTNCLSMTEEYELSAYDRHELNYNQIALGRLPMSVIGDYTIRTITNSTQTEIATGKRFDSKTITNY</sequence>
<keyword id="KW-0004">4Fe-4S</keyword>
<keyword id="KW-0150">Chloroplast</keyword>
<keyword id="KW-0408">Iron</keyword>
<keyword id="KW-0411">Iron-sulfur</keyword>
<keyword id="KW-0472">Membrane</keyword>
<keyword id="KW-0479">Metal-binding</keyword>
<keyword id="KW-0520">NAD</keyword>
<keyword id="KW-0521">NADP</keyword>
<keyword id="KW-0934">Plastid</keyword>
<keyword id="KW-0618">Plastoquinone</keyword>
<keyword id="KW-0874">Quinone</keyword>
<keyword id="KW-0677">Repeat</keyword>
<keyword id="KW-0793">Thylakoid</keyword>
<keyword id="KW-1278">Translocase</keyword>
<protein>
    <recommendedName>
        <fullName evidence="1">NAD(P)H-quinone oxidoreductase subunit I, chloroplastic</fullName>
        <ecNumber evidence="1">7.1.1.-</ecNumber>
    </recommendedName>
    <alternativeName>
        <fullName evidence="1">NAD(P)H dehydrogenase subunit I</fullName>
        <shortName evidence="1">NDH subunit I</shortName>
    </alternativeName>
    <alternativeName>
        <fullName evidence="1">NADH-plastoquinone oxidoreductase subunit I</fullName>
    </alternativeName>
</protein>
<name>NDHI_RANMC</name>
<comment type="function">
    <text evidence="1">NDH shuttles electrons from NAD(P)H:plastoquinone, via FMN and iron-sulfur (Fe-S) centers, to quinones in the photosynthetic chain and possibly in a chloroplast respiratory chain. The immediate electron acceptor for the enzyme in this species is believed to be plastoquinone. Couples the redox reaction to proton translocation, and thus conserves the redox energy in a proton gradient.</text>
</comment>
<comment type="catalytic activity">
    <reaction evidence="1">
        <text>a plastoquinone + NADH + (n+1) H(+)(in) = a plastoquinol + NAD(+) + n H(+)(out)</text>
        <dbReference type="Rhea" id="RHEA:42608"/>
        <dbReference type="Rhea" id="RHEA-COMP:9561"/>
        <dbReference type="Rhea" id="RHEA-COMP:9562"/>
        <dbReference type="ChEBI" id="CHEBI:15378"/>
        <dbReference type="ChEBI" id="CHEBI:17757"/>
        <dbReference type="ChEBI" id="CHEBI:57540"/>
        <dbReference type="ChEBI" id="CHEBI:57945"/>
        <dbReference type="ChEBI" id="CHEBI:62192"/>
    </reaction>
</comment>
<comment type="catalytic activity">
    <reaction evidence="1">
        <text>a plastoquinone + NADPH + (n+1) H(+)(in) = a plastoquinol + NADP(+) + n H(+)(out)</text>
        <dbReference type="Rhea" id="RHEA:42612"/>
        <dbReference type="Rhea" id="RHEA-COMP:9561"/>
        <dbReference type="Rhea" id="RHEA-COMP:9562"/>
        <dbReference type="ChEBI" id="CHEBI:15378"/>
        <dbReference type="ChEBI" id="CHEBI:17757"/>
        <dbReference type="ChEBI" id="CHEBI:57783"/>
        <dbReference type="ChEBI" id="CHEBI:58349"/>
        <dbReference type="ChEBI" id="CHEBI:62192"/>
    </reaction>
</comment>
<comment type="cofactor">
    <cofactor evidence="1">
        <name>[4Fe-4S] cluster</name>
        <dbReference type="ChEBI" id="CHEBI:49883"/>
    </cofactor>
    <text evidence="1">Binds 2 [4Fe-4S] clusters per subunit.</text>
</comment>
<comment type="subunit">
    <text evidence="1">NDH is composed of at least 16 different subunits, 5 of which are encoded in the nucleus.</text>
</comment>
<comment type="subcellular location">
    <subcellularLocation>
        <location evidence="1">Plastid</location>
        <location evidence="1">Chloroplast thylakoid membrane</location>
        <topology evidence="1">Peripheral membrane protein</topology>
    </subcellularLocation>
</comment>
<comment type="similarity">
    <text evidence="1">Belongs to the complex I 23 kDa subunit family.</text>
</comment>
<gene>
    <name evidence="1" type="primary">ndhI</name>
</gene>
<dbReference type="EC" id="7.1.1.-" evidence="1"/>
<dbReference type="EMBL" id="DQ359689">
    <property type="protein sequence ID" value="ABC70805.1"/>
    <property type="molecule type" value="Genomic_DNA"/>
</dbReference>
<dbReference type="RefSeq" id="YP_001004235.1">
    <property type="nucleotide sequence ID" value="NC_008796.1"/>
</dbReference>
<dbReference type="SMR" id="A1XGT7"/>
<dbReference type="GeneID" id="4712187"/>
<dbReference type="GO" id="GO:0009535">
    <property type="term" value="C:chloroplast thylakoid membrane"/>
    <property type="evidence" value="ECO:0007669"/>
    <property type="project" value="UniProtKB-SubCell"/>
</dbReference>
<dbReference type="GO" id="GO:0051539">
    <property type="term" value="F:4 iron, 4 sulfur cluster binding"/>
    <property type="evidence" value="ECO:0007669"/>
    <property type="project" value="UniProtKB-KW"/>
</dbReference>
<dbReference type="GO" id="GO:0005506">
    <property type="term" value="F:iron ion binding"/>
    <property type="evidence" value="ECO:0007669"/>
    <property type="project" value="UniProtKB-UniRule"/>
</dbReference>
<dbReference type="GO" id="GO:0008137">
    <property type="term" value="F:NADH dehydrogenase (ubiquinone) activity"/>
    <property type="evidence" value="ECO:0007669"/>
    <property type="project" value="InterPro"/>
</dbReference>
<dbReference type="GO" id="GO:0048038">
    <property type="term" value="F:quinone binding"/>
    <property type="evidence" value="ECO:0007669"/>
    <property type="project" value="UniProtKB-KW"/>
</dbReference>
<dbReference type="GO" id="GO:0019684">
    <property type="term" value="P:photosynthesis, light reaction"/>
    <property type="evidence" value="ECO:0007669"/>
    <property type="project" value="UniProtKB-UniRule"/>
</dbReference>
<dbReference type="FunFam" id="3.30.70.3270:FF:000006">
    <property type="entry name" value="NAD(P)H-quinone oxidoreductase subunit I, chloroplastic"/>
    <property type="match status" value="1"/>
</dbReference>
<dbReference type="Gene3D" id="3.30.70.3270">
    <property type="match status" value="1"/>
</dbReference>
<dbReference type="HAMAP" id="MF_01351">
    <property type="entry name" value="NDH1_NuoI"/>
    <property type="match status" value="1"/>
</dbReference>
<dbReference type="InterPro" id="IPR017896">
    <property type="entry name" value="4Fe4S_Fe-S-bd"/>
</dbReference>
<dbReference type="InterPro" id="IPR017900">
    <property type="entry name" value="4Fe4S_Fe_S_CS"/>
</dbReference>
<dbReference type="InterPro" id="IPR010226">
    <property type="entry name" value="NADH_quinone_OxRdtase_chainI"/>
</dbReference>
<dbReference type="InterPro" id="IPR004497">
    <property type="entry name" value="NDHI"/>
</dbReference>
<dbReference type="NCBIfam" id="TIGR00403">
    <property type="entry name" value="ndhI"/>
    <property type="match status" value="1"/>
</dbReference>
<dbReference type="NCBIfam" id="TIGR01971">
    <property type="entry name" value="NuoI"/>
    <property type="match status" value="1"/>
</dbReference>
<dbReference type="NCBIfam" id="NF004537">
    <property type="entry name" value="PRK05888.1-3"/>
    <property type="match status" value="1"/>
</dbReference>
<dbReference type="PANTHER" id="PTHR47275">
    <property type="entry name" value="NAD(P)H-QUINONE OXIDOREDUCTASE SUBUNIT I, CHLOROPLASTIC"/>
    <property type="match status" value="1"/>
</dbReference>
<dbReference type="PANTHER" id="PTHR47275:SF1">
    <property type="entry name" value="NAD(P)H-QUINONE OXIDOREDUCTASE SUBUNIT I, CHLOROPLASTIC"/>
    <property type="match status" value="1"/>
</dbReference>
<dbReference type="Pfam" id="PF13187">
    <property type="entry name" value="Fer4_9"/>
    <property type="match status" value="1"/>
</dbReference>
<dbReference type="SUPFAM" id="SSF54862">
    <property type="entry name" value="4Fe-4S ferredoxins"/>
    <property type="match status" value="1"/>
</dbReference>
<dbReference type="PROSITE" id="PS00198">
    <property type="entry name" value="4FE4S_FER_1"/>
    <property type="match status" value="2"/>
</dbReference>
<dbReference type="PROSITE" id="PS51379">
    <property type="entry name" value="4FE4S_FER_2"/>
    <property type="match status" value="2"/>
</dbReference>
<organism>
    <name type="scientific">Ranunculus macranthus</name>
    <name type="common">Large buttercup</name>
    <dbReference type="NCBI Taxonomy" id="334596"/>
    <lineage>
        <taxon>Eukaryota</taxon>
        <taxon>Viridiplantae</taxon>
        <taxon>Streptophyta</taxon>
        <taxon>Embryophyta</taxon>
        <taxon>Tracheophyta</taxon>
        <taxon>Spermatophyta</taxon>
        <taxon>Magnoliopsida</taxon>
        <taxon>Ranunculales</taxon>
        <taxon>Ranunculaceae</taxon>
        <taxon>Ranunculoideae</taxon>
        <taxon>Ranunculeae</taxon>
        <taxon>Ranunculus</taxon>
    </lineage>
</organism>
<geneLocation type="chloroplast"/>
<accession>A1XGT7</accession>